<organism>
    <name type="scientific">Streptomyces coelicolor (strain ATCC BAA-471 / A3(2) / M145)</name>
    <dbReference type="NCBI Taxonomy" id="100226"/>
    <lineage>
        <taxon>Bacteria</taxon>
        <taxon>Bacillati</taxon>
        <taxon>Actinomycetota</taxon>
        <taxon>Actinomycetes</taxon>
        <taxon>Kitasatosporales</taxon>
        <taxon>Streptomycetaceae</taxon>
        <taxon>Streptomyces</taxon>
        <taxon>Streptomyces albidoflavus group</taxon>
    </lineage>
</organism>
<keyword id="KW-0378">Hydrolase</keyword>
<keyword id="KW-0479">Metal-binding</keyword>
<keyword id="KW-0482">Metalloprotease</keyword>
<keyword id="KW-0645">Protease</keyword>
<keyword id="KW-1185">Reference proteome</keyword>
<keyword id="KW-0862">Zinc</keyword>
<name>Y5738_STRCO</name>
<evidence type="ECO:0000250" key="1"/>
<evidence type="ECO:0000255" key="2">
    <source>
        <dbReference type="PROSITE-ProRule" id="PRU10096"/>
    </source>
</evidence>
<evidence type="ECO:0000305" key="3"/>
<sequence>MTSRSATATARTSSEARAVARTQTLIKGEHGIGTVRRTTLPGGLRIVTETLPSVRSATFGIWAHVGSRDETPALNGATHYLEHLLFKGTRKRSALDISSAIDAVGGEMNAFTAKEYTCYYARVLDTDLPLAIDVVCDMLTGSLIQEEDVDVERGAILEEIAMTEDDPGDCVHDLFAHTMFGDNALGRPVLGTVDTVNALTADRIRRFYRKHYDPTHLVVAAAGNVDHNKVVRQVRAAFEKSGALKDPAAQPLAPRAGRRTVRAAGRVELIGRKTEQAHVILGMPGLARTDERRWAMGVLNTALGGGMSSRLFQEVREKRGLAYSVYSYTSGFADCGLFGVYAGCRPSQVHDVLKICRDELDHVAEHGLTDDEIGRAVGQLQGSTVLGLEDTGALMNRIGKSELCWGEQMSVDDMLARIASVTPDDVRAVARDVLGRRPSLSVIGPLKDKQASRLHDAVA</sequence>
<feature type="chain" id="PRO_0000074428" description="Uncharacterized zinc protease SCO5738">
    <location>
        <begin position="1"/>
        <end position="459"/>
    </location>
</feature>
<feature type="active site" description="Proton acceptor" evidence="2">
    <location>
        <position position="82"/>
    </location>
</feature>
<feature type="binding site" evidence="2">
    <location>
        <position position="79"/>
    </location>
    <ligand>
        <name>Zn(2+)</name>
        <dbReference type="ChEBI" id="CHEBI:29105"/>
    </ligand>
</feature>
<feature type="binding site" evidence="2">
    <location>
        <position position="83"/>
    </location>
    <ligand>
        <name>Zn(2+)</name>
        <dbReference type="ChEBI" id="CHEBI:29105"/>
    </ligand>
</feature>
<feature type="binding site" evidence="2">
    <location>
        <position position="159"/>
    </location>
    <ligand>
        <name>Zn(2+)</name>
        <dbReference type="ChEBI" id="CHEBI:29105"/>
    </ligand>
</feature>
<gene>
    <name type="ordered locus">SCO5738</name>
    <name type="ORF">SC9A10.02</name>
</gene>
<accession>O86835</accession>
<dbReference type="EC" id="3.4.24.-"/>
<dbReference type="EMBL" id="AL939124">
    <property type="protein sequence ID" value="CAA20289.1"/>
    <property type="molecule type" value="Genomic_DNA"/>
</dbReference>
<dbReference type="PIR" id="T35838">
    <property type="entry name" value="T35838"/>
</dbReference>
<dbReference type="RefSeq" id="NP_629863.1">
    <property type="nucleotide sequence ID" value="NC_003888.3"/>
</dbReference>
<dbReference type="RefSeq" id="WP_003973289.1">
    <property type="nucleotide sequence ID" value="NZ_VNID01000024.1"/>
</dbReference>
<dbReference type="SMR" id="O86835"/>
<dbReference type="FunCoup" id="O86835">
    <property type="interactions" value="444"/>
</dbReference>
<dbReference type="STRING" id="100226.gene:17763394"/>
<dbReference type="PaxDb" id="100226-SCO5738"/>
<dbReference type="KEGG" id="sco:SCO5738"/>
<dbReference type="PATRIC" id="fig|100226.15.peg.5826"/>
<dbReference type="eggNOG" id="COG0612">
    <property type="taxonomic scope" value="Bacteria"/>
</dbReference>
<dbReference type="HOGENOM" id="CLU_009902_3_3_11"/>
<dbReference type="InParanoid" id="O86835"/>
<dbReference type="OrthoDB" id="9811314at2"/>
<dbReference type="PhylomeDB" id="O86835"/>
<dbReference type="Proteomes" id="UP000001973">
    <property type="component" value="Chromosome"/>
</dbReference>
<dbReference type="GO" id="GO:0046872">
    <property type="term" value="F:metal ion binding"/>
    <property type="evidence" value="ECO:0007669"/>
    <property type="project" value="UniProtKB-KW"/>
</dbReference>
<dbReference type="GO" id="GO:0004222">
    <property type="term" value="F:metalloendopeptidase activity"/>
    <property type="evidence" value="ECO:0007669"/>
    <property type="project" value="InterPro"/>
</dbReference>
<dbReference type="GO" id="GO:0006508">
    <property type="term" value="P:proteolysis"/>
    <property type="evidence" value="ECO:0007669"/>
    <property type="project" value="UniProtKB-KW"/>
</dbReference>
<dbReference type="FunFam" id="3.30.830.10:FF:000008">
    <property type="entry name" value="Mitochondrial-processing peptidase subunit beta"/>
    <property type="match status" value="1"/>
</dbReference>
<dbReference type="Gene3D" id="3.30.830.10">
    <property type="entry name" value="Metalloenzyme, LuxS/M16 peptidase-like"/>
    <property type="match status" value="2"/>
</dbReference>
<dbReference type="InterPro" id="IPR011249">
    <property type="entry name" value="Metalloenz_LuxS/M16"/>
</dbReference>
<dbReference type="InterPro" id="IPR050361">
    <property type="entry name" value="MPP/UQCRC_Complex"/>
</dbReference>
<dbReference type="InterPro" id="IPR011765">
    <property type="entry name" value="Pept_M16_N"/>
</dbReference>
<dbReference type="InterPro" id="IPR001431">
    <property type="entry name" value="Pept_M16_Zn_BS"/>
</dbReference>
<dbReference type="InterPro" id="IPR007863">
    <property type="entry name" value="Peptidase_M16_C"/>
</dbReference>
<dbReference type="PANTHER" id="PTHR11851">
    <property type="entry name" value="METALLOPROTEASE"/>
    <property type="match status" value="1"/>
</dbReference>
<dbReference type="PANTHER" id="PTHR11851:SF49">
    <property type="entry name" value="MITOCHONDRIAL-PROCESSING PEPTIDASE SUBUNIT ALPHA"/>
    <property type="match status" value="1"/>
</dbReference>
<dbReference type="Pfam" id="PF00675">
    <property type="entry name" value="Peptidase_M16"/>
    <property type="match status" value="1"/>
</dbReference>
<dbReference type="Pfam" id="PF05193">
    <property type="entry name" value="Peptidase_M16_C"/>
    <property type="match status" value="1"/>
</dbReference>
<dbReference type="SUPFAM" id="SSF63411">
    <property type="entry name" value="LuxS/MPP-like metallohydrolase"/>
    <property type="match status" value="2"/>
</dbReference>
<dbReference type="PROSITE" id="PS00143">
    <property type="entry name" value="INSULINASE"/>
    <property type="match status" value="1"/>
</dbReference>
<proteinExistence type="inferred from homology"/>
<protein>
    <recommendedName>
        <fullName>Uncharacterized zinc protease SCO5738</fullName>
        <ecNumber>3.4.24.-</ecNumber>
    </recommendedName>
</protein>
<comment type="cofactor">
    <cofactor evidence="1">
        <name>Zn(2+)</name>
        <dbReference type="ChEBI" id="CHEBI:29105"/>
    </cofactor>
    <text evidence="1">Binds 1 zinc ion per subunit.</text>
</comment>
<comment type="similarity">
    <text evidence="3">Belongs to the peptidase M16 family.</text>
</comment>
<comment type="caution">
    <text evidence="3">It is uncertain whether Met-1 or Val-35 is the initiator.</text>
</comment>
<reference key="1">
    <citation type="journal article" date="2002" name="Nature">
        <title>Complete genome sequence of the model actinomycete Streptomyces coelicolor A3(2).</title>
        <authorList>
            <person name="Bentley S.D."/>
            <person name="Chater K.F."/>
            <person name="Cerdeno-Tarraga A.-M."/>
            <person name="Challis G.L."/>
            <person name="Thomson N.R."/>
            <person name="James K.D."/>
            <person name="Harris D.E."/>
            <person name="Quail M.A."/>
            <person name="Kieser H."/>
            <person name="Harper D."/>
            <person name="Bateman A."/>
            <person name="Brown S."/>
            <person name="Chandra G."/>
            <person name="Chen C.W."/>
            <person name="Collins M."/>
            <person name="Cronin A."/>
            <person name="Fraser A."/>
            <person name="Goble A."/>
            <person name="Hidalgo J."/>
            <person name="Hornsby T."/>
            <person name="Howarth S."/>
            <person name="Huang C.-H."/>
            <person name="Kieser T."/>
            <person name="Larke L."/>
            <person name="Murphy L.D."/>
            <person name="Oliver K."/>
            <person name="O'Neil S."/>
            <person name="Rabbinowitsch E."/>
            <person name="Rajandream M.A."/>
            <person name="Rutherford K.M."/>
            <person name="Rutter S."/>
            <person name="Seeger K."/>
            <person name="Saunders D."/>
            <person name="Sharp S."/>
            <person name="Squares R."/>
            <person name="Squares S."/>
            <person name="Taylor K."/>
            <person name="Warren T."/>
            <person name="Wietzorrek A."/>
            <person name="Woodward J.R."/>
            <person name="Barrell B.G."/>
            <person name="Parkhill J."/>
            <person name="Hopwood D.A."/>
        </authorList>
    </citation>
    <scope>NUCLEOTIDE SEQUENCE [LARGE SCALE GENOMIC DNA]</scope>
    <source>
        <strain>ATCC BAA-471 / A3(2) / M145</strain>
    </source>
</reference>